<proteinExistence type="inferred from homology"/>
<reference key="1">
    <citation type="submission" date="2007-07" db="EMBL/GenBank/DDBJ databases">
        <title>Complete sequence of chromosome of Shewanella baltica OS185.</title>
        <authorList>
            <consortium name="US DOE Joint Genome Institute"/>
            <person name="Copeland A."/>
            <person name="Lucas S."/>
            <person name="Lapidus A."/>
            <person name="Barry K."/>
            <person name="Glavina del Rio T."/>
            <person name="Dalin E."/>
            <person name="Tice H."/>
            <person name="Pitluck S."/>
            <person name="Sims D."/>
            <person name="Brettin T."/>
            <person name="Bruce D."/>
            <person name="Detter J.C."/>
            <person name="Han C."/>
            <person name="Schmutz J."/>
            <person name="Larimer F."/>
            <person name="Land M."/>
            <person name="Hauser L."/>
            <person name="Kyrpides N."/>
            <person name="Mikhailova N."/>
            <person name="Brettar I."/>
            <person name="Rodrigues J."/>
            <person name="Konstantinidis K."/>
            <person name="Tiedje J."/>
            <person name="Richardson P."/>
        </authorList>
    </citation>
    <scope>NUCLEOTIDE SEQUENCE [LARGE SCALE GENOMIC DNA]</scope>
    <source>
        <strain>OS185</strain>
    </source>
</reference>
<protein>
    <recommendedName>
        <fullName evidence="2">Purine nucleoside phosphorylase DeoD-type</fullName>
        <shortName evidence="2">PNP</shortName>
        <ecNumber evidence="2">2.4.2.1</ecNumber>
    </recommendedName>
</protein>
<comment type="function">
    <text evidence="2">Catalyzes the reversible phosphorolytic breakdown of the N-glycosidic bond in the beta-(deoxy)ribonucleoside molecules, with the formation of the corresponding free purine bases and pentose-1-phosphate.</text>
</comment>
<comment type="catalytic activity">
    <reaction evidence="2">
        <text>a purine D-ribonucleoside + phosphate = a purine nucleobase + alpha-D-ribose 1-phosphate</text>
        <dbReference type="Rhea" id="RHEA:19805"/>
        <dbReference type="ChEBI" id="CHEBI:26386"/>
        <dbReference type="ChEBI" id="CHEBI:43474"/>
        <dbReference type="ChEBI" id="CHEBI:57720"/>
        <dbReference type="ChEBI" id="CHEBI:142355"/>
        <dbReference type="EC" id="2.4.2.1"/>
    </reaction>
</comment>
<comment type="catalytic activity">
    <reaction evidence="2">
        <text>a purine 2'-deoxy-D-ribonucleoside + phosphate = a purine nucleobase + 2-deoxy-alpha-D-ribose 1-phosphate</text>
        <dbReference type="Rhea" id="RHEA:36431"/>
        <dbReference type="ChEBI" id="CHEBI:26386"/>
        <dbReference type="ChEBI" id="CHEBI:43474"/>
        <dbReference type="ChEBI" id="CHEBI:57259"/>
        <dbReference type="ChEBI" id="CHEBI:142361"/>
        <dbReference type="EC" id="2.4.2.1"/>
    </reaction>
</comment>
<comment type="subunit">
    <text evidence="2">Homohexamer; trimer of homodimers.</text>
</comment>
<comment type="similarity">
    <text evidence="2">Belongs to the PNP/UDP phosphorylase family.</text>
</comment>
<accession>A6WRB5</accession>
<evidence type="ECO:0000250" key="1">
    <source>
        <dbReference type="UniProtKB" id="P50389"/>
    </source>
</evidence>
<evidence type="ECO:0000255" key="2">
    <source>
        <dbReference type="HAMAP-Rule" id="MF_01627"/>
    </source>
</evidence>
<keyword id="KW-0328">Glycosyltransferase</keyword>
<keyword id="KW-0808">Transferase</keyword>
<dbReference type="EC" id="2.4.2.1" evidence="2"/>
<dbReference type="EMBL" id="CP000753">
    <property type="protein sequence ID" value="ABS09354.1"/>
    <property type="molecule type" value="Genomic_DNA"/>
</dbReference>
<dbReference type="RefSeq" id="WP_006086929.1">
    <property type="nucleotide sequence ID" value="NC_009665.1"/>
</dbReference>
<dbReference type="SMR" id="A6WRB5"/>
<dbReference type="GeneID" id="11773408"/>
<dbReference type="KEGG" id="sbm:Shew185_3227"/>
<dbReference type="HOGENOM" id="CLU_068457_2_0_6"/>
<dbReference type="GO" id="GO:0005829">
    <property type="term" value="C:cytosol"/>
    <property type="evidence" value="ECO:0007669"/>
    <property type="project" value="TreeGrafter"/>
</dbReference>
<dbReference type="GO" id="GO:0004731">
    <property type="term" value="F:purine-nucleoside phosphorylase activity"/>
    <property type="evidence" value="ECO:0007669"/>
    <property type="project" value="UniProtKB-UniRule"/>
</dbReference>
<dbReference type="GO" id="GO:0006152">
    <property type="term" value="P:purine nucleoside catabolic process"/>
    <property type="evidence" value="ECO:0007669"/>
    <property type="project" value="TreeGrafter"/>
</dbReference>
<dbReference type="CDD" id="cd09006">
    <property type="entry name" value="PNP_EcPNPI-like"/>
    <property type="match status" value="1"/>
</dbReference>
<dbReference type="Gene3D" id="3.40.50.1580">
    <property type="entry name" value="Nucleoside phosphorylase domain"/>
    <property type="match status" value="1"/>
</dbReference>
<dbReference type="HAMAP" id="MF_01627">
    <property type="entry name" value="Pur_nucleosid_phosp"/>
    <property type="match status" value="1"/>
</dbReference>
<dbReference type="InterPro" id="IPR004402">
    <property type="entry name" value="DeoD-type"/>
</dbReference>
<dbReference type="InterPro" id="IPR018016">
    <property type="entry name" value="Nucleoside_phosphorylase_CS"/>
</dbReference>
<dbReference type="InterPro" id="IPR000845">
    <property type="entry name" value="Nucleoside_phosphorylase_d"/>
</dbReference>
<dbReference type="InterPro" id="IPR035994">
    <property type="entry name" value="Nucleoside_phosphorylase_sf"/>
</dbReference>
<dbReference type="NCBIfam" id="TIGR00107">
    <property type="entry name" value="deoD"/>
    <property type="match status" value="1"/>
</dbReference>
<dbReference type="NCBIfam" id="NF004489">
    <property type="entry name" value="PRK05819.1"/>
    <property type="match status" value="1"/>
</dbReference>
<dbReference type="NCBIfam" id="NF009914">
    <property type="entry name" value="PRK13374.1"/>
    <property type="match status" value="1"/>
</dbReference>
<dbReference type="PANTHER" id="PTHR43691:SF2">
    <property type="entry name" value="PURINE NUCLEOSIDE PHOSPHORYLASE DEOD-TYPE"/>
    <property type="match status" value="1"/>
</dbReference>
<dbReference type="PANTHER" id="PTHR43691">
    <property type="entry name" value="URIDINE PHOSPHORYLASE"/>
    <property type="match status" value="1"/>
</dbReference>
<dbReference type="Pfam" id="PF01048">
    <property type="entry name" value="PNP_UDP_1"/>
    <property type="match status" value="1"/>
</dbReference>
<dbReference type="SUPFAM" id="SSF53167">
    <property type="entry name" value="Purine and uridine phosphorylases"/>
    <property type="match status" value="1"/>
</dbReference>
<dbReference type="PROSITE" id="PS01232">
    <property type="entry name" value="PNP_UDP_1"/>
    <property type="match status" value="1"/>
</dbReference>
<name>DEOD_SHEB8</name>
<organism>
    <name type="scientific">Shewanella baltica (strain OS185)</name>
    <dbReference type="NCBI Taxonomy" id="402882"/>
    <lineage>
        <taxon>Bacteria</taxon>
        <taxon>Pseudomonadati</taxon>
        <taxon>Pseudomonadota</taxon>
        <taxon>Gammaproteobacteria</taxon>
        <taxon>Alteromonadales</taxon>
        <taxon>Shewanellaceae</taxon>
        <taxon>Shewanella</taxon>
    </lineage>
</organism>
<sequence length="236" mass="25632">MATPHINAVEGAFAETMLFPGDPLRAKYIAETFLENVEQVTDVRNMLGFTGTYKGKRISVMGSGMGIPSCSIYATELIRDYGVKNLIRVGTCGAISTDVKVRDVIIGMGACTDSAVNRLRFKGQDFAAIANYELMNAVIESAKVRGTKVRVGNIFSADLFYTPDPQMFDVMEKMGVLGVEMEAAGLYGVAHEFGARALCVVTVSDHIRTGEKTSAEERQTTFNDMIIMTLEAAITL</sequence>
<feature type="chain" id="PRO_1000069642" description="Purine nucleoside phosphorylase DeoD-type">
    <location>
        <begin position="1"/>
        <end position="236"/>
    </location>
</feature>
<feature type="active site" description="Proton donor" evidence="2">
    <location>
        <position position="205"/>
    </location>
</feature>
<feature type="binding site" evidence="1">
    <location>
        <position position="5"/>
    </location>
    <ligand>
        <name>a purine D-ribonucleoside</name>
        <dbReference type="ChEBI" id="CHEBI:142355"/>
        <note>ligand shared between dimeric partners</note>
    </ligand>
</feature>
<feature type="binding site" description="in other chain" evidence="1">
    <location>
        <position position="21"/>
    </location>
    <ligand>
        <name>phosphate</name>
        <dbReference type="ChEBI" id="CHEBI:43474"/>
        <note>ligand shared between dimeric partners</note>
    </ligand>
</feature>
<feature type="binding site" description="in other chain" evidence="1">
    <location>
        <position position="25"/>
    </location>
    <ligand>
        <name>phosphate</name>
        <dbReference type="ChEBI" id="CHEBI:43474"/>
        <note>ligand shared between dimeric partners</note>
    </ligand>
</feature>
<feature type="binding site" evidence="1">
    <location>
        <position position="44"/>
    </location>
    <ligand>
        <name>phosphate</name>
        <dbReference type="ChEBI" id="CHEBI:43474"/>
        <note>ligand shared between dimeric partners</note>
    </ligand>
</feature>
<feature type="binding site" description="in other chain" evidence="1">
    <location>
        <begin position="88"/>
        <end position="91"/>
    </location>
    <ligand>
        <name>phosphate</name>
        <dbReference type="ChEBI" id="CHEBI:43474"/>
        <note>ligand shared between dimeric partners</note>
    </ligand>
</feature>
<feature type="binding site" description="in other chain" evidence="1">
    <location>
        <begin position="180"/>
        <end position="182"/>
    </location>
    <ligand>
        <name>a purine D-ribonucleoside</name>
        <dbReference type="ChEBI" id="CHEBI:142355"/>
        <note>ligand shared between dimeric partners</note>
    </ligand>
</feature>
<feature type="binding site" description="in other chain" evidence="1">
    <location>
        <begin position="204"/>
        <end position="205"/>
    </location>
    <ligand>
        <name>a purine D-ribonucleoside</name>
        <dbReference type="ChEBI" id="CHEBI:142355"/>
        <note>ligand shared between dimeric partners</note>
    </ligand>
</feature>
<feature type="site" description="Important for catalytic activity" evidence="2">
    <location>
        <position position="218"/>
    </location>
</feature>
<gene>
    <name evidence="2" type="primary">deoD</name>
    <name type="ordered locus">Shew185_3227</name>
</gene>